<name>GLK_SALPC</name>
<accession>C0PZD3</accession>
<dbReference type="EC" id="2.7.1.2" evidence="1"/>
<dbReference type="EMBL" id="CP000857">
    <property type="protein sequence ID" value="ACN45416.1"/>
    <property type="molecule type" value="Genomic_DNA"/>
</dbReference>
<dbReference type="RefSeq" id="WP_000170376.1">
    <property type="nucleotide sequence ID" value="NC_012125.1"/>
</dbReference>
<dbReference type="SMR" id="C0PZD3"/>
<dbReference type="KEGG" id="sei:SPC_1252"/>
<dbReference type="HOGENOM" id="CLU_042582_1_0_6"/>
<dbReference type="Proteomes" id="UP000001599">
    <property type="component" value="Chromosome"/>
</dbReference>
<dbReference type="GO" id="GO:0005829">
    <property type="term" value="C:cytosol"/>
    <property type="evidence" value="ECO:0007669"/>
    <property type="project" value="TreeGrafter"/>
</dbReference>
<dbReference type="GO" id="GO:0005524">
    <property type="term" value="F:ATP binding"/>
    <property type="evidence" value="ECO:0007669"/>
    <property type="project" value="UniProtKB-UniRule"/>
</dbReference>
<dbReference type="GO" id="GO:0005536">
    <property type="term" value="F:D-glucose binding"/>
    <property type="evidence" value="ECO:0007669"/>
    <property type="project" value="InterPro"/>
</dbReference>
<dbReference type="GO" id="GO:0004340">
    <property type="term" value="F:glucokinase activity"/>
    <property type="evidence" value="ECO:0007669"/>
    <property type="project" value="UniProtKB-UniRule"/>
</dbReference>
<dbReference type="GO" id="GO:0006096">
    <property type="term" value="P:glycolytic process"/>
    <property type="evidence" value="ECO:0007669"/>
    <property type="project" value="UniProtKB-UniRule"/>
</dbReference>
<dbReference type="CDD" id="cd24008">
    <property type="entry name" value="ASKHA_NBD_GLK"/>
    <property type="match status" value="1"/>
</dbReference>
<dbReference type="FunFam" id="3.30.420.40:FF:000045">
    <property type="entry name" value="Glucokinase"/>
    <property type="match status" value="1"/>
</dbReference>
<dbReference type="FunFam" id="3.40.367.20:FF:000002">
    <property type="entry name" value="Glucokinase"/>
    <property type="match status" value="1"/>
</dbReference>
<dbReference type="Gene3D" id="3.30.420.40">
    <property type="match status" value="1"/>
</dbReference>
<dbReference type="Gene3D" id="3.40.367.20">
    <property type="match status" value="1"/>
</dbReference>
<dbReference type="HAMAP" id="MF_00524">
    <property type="entry name" value="Glucokinase"/>
    <property type="match status" value="1"/>
</dbReference>
<dbReference type="InterPro" id="IPR043129">
    <property type="entry name" value="ATPase_NBD"/>
</dbReference>
<dbReference type="InterPro" id="IPR050201">
    <property type="entry name" value="Bacterial_glucokinase"/>
</dbReference>
<dbReference type="InterPro" id="IPR003836">
    <property type="entry name" value="Glucokinase"/>
</dbReference>
<dbReference type="NCBIfam" id="TIGR00749">
    <property type="entry name" value="glk"/>
    <property type="match status" value="1"/>
</dbReference>
<dbReference type="NCBIfam" id="NF001414">
    <property type="entry name" value="PRK00292.1-1"/>
    <property type="match status" value="1"/>
</dbReference>
<dbReference type="NCBIfam" id="NF001416">
    <property type="entry name" value="PRK00292.1-3"/>
    <property type="match status" value="1"/>
</dbReference>
<dbReference type="PANTHER" id="PTHR47690">
    <property type="entry name" value="GLUCOKINASE"/>
    <property type="match status" value="1"/>
</dbReference>
<dbReference type="PANTHER" id="PTHR47690:SF1">
    <property type="entry name" value="GLUCOKINASE"/>
    <property type="match status" value="1"/>
</dbReference>
<dbReference type="Pfam" id="PF02685">
    <property type="entry name" value="Glucokinase"/>
    <property type="match status" value="1"/>
</dbReference>
<dbReference type="SUPFAM" id="SSF53067">
    <property type="entry name" value="Actin-like ATPase domain"/>
    <property type="match status" value="1"/>
</dbReference>
<feature type="chain" id="PRO_1000146254" description="Glucokinase">
    <location>
        <begin position="1"/>
        <end position="321"/>
    </location>
</feature>
<feature type="binding site" evidence="1">
    <location>
        <begin position="8"/>
        <end position="13"/>
    </location>
    <ligand>
        <name>ATP</name>
        <dbReference type="ChEBI" id="CHEBI:30616"/>
    </ligand>
</feature>
<comment type="catalytic activity">
    <reaction evidence="1">
        <text>D-glucose + ATP = D-glucose 6-phosphate + ADP + H(+)</text>
        <dbReference type="Rhea" id="RHEA:17825"/>
        <dbReference type="ChEBI" id="CHEBI:4167"/>
        <dbReference type="ChEBI" id="CHEBI:15378"/>
        <dbReference type="ChEBI" id="CHEBI:30616"/>
        <dbReference type="ChEBI" id="CHEBI:61548"/>
        <dbReference type="ChEBI" id="CHEBI:456216"/>
        <dbReference type="EC" id="2.7.1.2"/>
    </reaction>
</comment>
<comment type="subcellular location">
    <subcellularLocation>
        <location evidence="1">Cytoplasm</location>
    </subcellularLocation>
</comment>
<comment type="similarity">
    <text evidence="1">Belongs to the bacterial glucokinase family.</text>
</comment>
<sequence length="321" mass="34622">MTKYALVGDVGGTNARLALCDIASGEISQAKTYSGLDYPSLEAVVRVYLDEHSVSVEDGCIAIACPITGDWVAMTNHTWAFSIAEMKKNLGFSHLEIINDFTAVSMAIPMLKKEHLIQFGGGEPVDGKPIAVYGAGTGLGVAHLVHVDKRWISLPGEGGHVDFAPNSEEEAMILEILRAEIGHVSAERVLSGPGLVNLYRAIVKSDNRLPENLRPKDITERALADNCIDCRRALSLFCVIMGRFGGDLALTMGTFGGVYIAGGIVPRFLEFFKASGFRGGFEDKGRFKDYVHGIPVYLIVHDNPGLLGSGAHLRQTLGHIL</sequence>
<reference key="1">
    <citation type="journal article" date="2009" name="PLoS ONE">
        <title>Salmonella paratyphi C: genetic divergence from Salmonella choleraesuis and pathogenic convergence with Salmonella typhi.</title>
        <authorList>
            <person name="Liu W.-Q."/>
            <person name="Feng Y."/>
            <person name="Wang Y."/>
            <person name="Zou Q.-H."/>
            <person name="Chen F."/>
            <person name="Guo J.-T."/>
            <person name="Peng Y.-H."/>
            <person name="Jin Y."/>
            <person name="Li Y.-G."/>
            <person name="Hu S.-N."/>
            <person name="Johnston R.N."/>
            <person name="Liu G.-R."/>
            <person name="Liu S.-L."/>
        </authorList>
    </citation>
    <scope>NUCLEOTIDE SEQUENCE [LARGE SCALE GENOMIC DNA]</scope>
    <source>
        <strain>RKS4594</strain>
    </source>
</reference>
<proteinExistence type="inferred from homology"/>
<evidence type="ECO:0000255" key="1">
    <source>
        <dbReference type="HAMAP-Rule" id="MF_00524"/>
    </source>
</evidence>
<gene>
    <name evidence="1" type="primary">glk</name>
    <name type="ordered locus">SPC_1252</name>
</gene>
<organism>
    <name type="scientific">Salmonella paratyphi C (strain RKS4594)</name>
    <dbReference type="NCBI Taxonomy" id="476213"/>
    <lineage>
        <taxon>Bacteria</taxon>
        <taxon>Pseudomonadati</taxon>
        <taxon>Pseudomonadota</taxon>
        <taxon>Gammaproteobacteria</taxon>
        <taxon>Enterobacterales</taxon>
        <taxon>Enterobacteriaceae</taxon>
        <taxon>Salmonella</taxon>
    </lineage>
</organism>
<protein>
    <recommendedName>
        <fullName evidence="1">Glucokinase</fullName>
        <ecNumber evidence="1">2.7.1.2</ecNumber>
    </recommendedName>
    <alternativeName>
        <fullName evidence="1">Glucose kinase</fullName>
    </alternativeName>
</protein>
<keyword id="KW-0067">ATP-binding</keyword>
<keyword id="KW-0963">Cytoplasm</keyword>
<keyword id="KW-0324">Glycolysis</keyword>
<keyword id="KW-0418">Kinase</keyword>
<keyword id="KW-0547">Nucleotide-binding</keyword>
<keyword id="KW-0808">Transferase</keyword>